<gene>
    <name type="primary">ABCF4</name>
    <name type="synonym">GCN4</name>
    <name type="ordered locus">At3g54540</name>
    <name type="ORF">T14E10.110</name>
</gene>
<evidence type="ECO:0000255" key="1">
    <source>
        <dbReference type="PROSITE-ProRule" id="PRU00434"/>
    </source>
</evidence>
<evidence type="ECO:0000256" key="2">
    <source>
        <dbReference type="SAM" id="MobiDB-lite"/>
    </source>
</evidence>
<evidence type="ECO:0000305" key="3"/>
<reference key="1">
    <citation type="journal article" date="2000" name="Nature">
        <title>Sequence and analysis of chromosome 3 of the plant Arabidopsis thaliana.</title>
        <authorList>
            <person name="Salanoubat M."/>
            <person name="Lemcke K."/>
            <person name="Rieger M."/>
            <person name="Ansorge W."/>
            <person name="Unseld M."/>
            <person name="Fartmann B."/>
            <person name="Valle G."/>
            <person name="Bloecker H."/>
            <person name="Perez-Alonso M."/>
            <person name="Obermaier B."/>
            <person name="Delseny M."/>
            <person name="Boutry M."/>
            <person name="Grivell L.A."/>
            <person name="Mache R."/>
            <person name="Puigdomenech P."/>
            <person name="De Simone V."/>
            <person name="Choisne N."/>
            <person name="Artiguenave F."/>
            <person name="Robert C."/>
            <person name="Brottier P."/>
            <person name="Wincker P."/>
            <person name="Cattolico L."/>
            <person name="Weissenbach J."/>
            <person name="Saurin W."/>
            <person name="Quetier F."/>
            <person name="Schaefer M."/>
            <person name="Mueller-Auer S."/>
            <person name="Gabel C."/>
            <person name="Fuchs M."/>
            <person name="Benes V."/>
            <person name="Wurmbach E."/>
            <person name="Drzonek H."/>
            <person name="Erfle H."/>
            <person name="Jordan N."/>
            <person name="Bangert S."/>
            <person name="Wiedelmann R."/>
            <person name="Kranz H."/>
            <person name="Voss H."/>
            <person name="Holland R."/>
            <person name="Brandt P."/>
            <person name="Nyakatura G."/>
            <person name="Vezzi A."/>
            <person name="D'Angelo M."/>
            <person name="Pallavicini A."/>
            <person name="Toppo S."/>
            <person name="Simionati B."/>
            <person name="Conrad A."/>
            <person name="Hornischer K."/>
            <person name="Kauer G."/>
            <person name="Loehnert T.-H."/>
            <person name="Nordsiek G."/>
            <person name="Reichelt J."/>
            <person name="Scharfe M."/>
            <person name="Schoen O."/>
            <person name="Bargues M."/>
            <person name="Terol J."/>
            <person name="Climent J."/>
            <person name="Navarro P."/>
            <person name="Collado C."/>
            <person name="Perez-Perez A."/>
            <person name="Ottenwaelder B."/>
            <person name="Duchemin D."/>
            <person name="Cooke R."/>
            <person name="Laudie M."/>
            <person name="Berger-Llauro C."/>
            <person name="Purnelle B."/>
            <person name="Masuy D."/>
            <person name="de Haan M."/>
            <person name="Maarse A.C."/>
            <person name="Alcaraz J.-P."/>
            <person name="Cottet A."/>
            <person name="Casacuberta E."/>
            <person name="Monfort A."/>
            <person name="Argiriou A."/>
            <person name="Flores M."/>
            <person name="Liguori R."/>
            <person name="Vitale D."/>
            <person name="Mannhaupt G."/>
            <person name="Haase D."/>
            <person name="Schoof H."/>
            <person name="Rudd S."/>
            <person name="Zaccaria P."/>
            <person name="Mewes H.-W."/>
            <person name="Mayer K.F.X."/>
            <person name="Kaul S."/>
            <person name="Town C.D."/>
            <person name="Koo H.L."/>
            <person name="Tallon L.J."/>
            <person name="Jenkins J."/>
            <person name="Rooney T."/>
            <person name="Rizzo M."/>
            <person name="Walts A."/>
            <person name="Utterback T."/>
            <person name="Fujii C.Y."/>
            <person name="Shea T.P."/>
            <person name="Creasy T.H."/>
            <person name="Haas B."/>
            <person name="Maiti R."/>
            <person name="Wu D."/>
            <person name="Peterson J."/>
            <person name="Van Aken S."/>
            <person name="Pai G."/>
            <person name="Militscher J."/>
            <person name="Sellers P."/>
            <person name="Gill J.E."/>
            <person name="Feldblyum T.V."/>
            <person name="Preuss D."/>
            <person name="Lin X."/>
            <person name="Nierman W.C."/>
            <person name="Salzberg S.L."/>
            <person name="White O."/>
            <person name="Venter J.C."/>
            <person name="Fraser C.M."/>
            <person name="Kaneko T."/>
            <person name="Nakamura Y."/>
            <person name="Sato S."/>
            <person name="Kato T."/>
            <person name="Asamizu E."/>
            <person name="Sasamoto S."/>
            <person name="Kimura T."/>
            <person name="Idesawa K."/>
            <person name="Kawashima K."/>
            <person name="Kishida Y."/>
            <person name="Kiyokawa C."/>
            <person name="Kohara M."/>
            <person name="Matsumoto M."/>
            <person name="Matsuno A."/>
            <person name="Muraki A."/>
            <person name="Nakayama S."/>
            <person name="Nakazaki N."/>
            <person name="Shinpo S."/>
            <person name="Takeuchi C."/>
            <person name="Wada T."/>
            <person name="Watanabe A."/>
            <person name="Yamada M."/>
            <person name="Yasuda M."/>
            <person name="Tabata S."/>
        </authorList>
    </citation>
    <scope>NUCLEOTIDE SEQUENCE [LARGE SCALE GENOMIC DNA]</scope>
    <source>
        <strain>cv. Columbia</strain>
    </source>
</reference>
<reference key="2">
    <citation type="journal article" date="2017" name="Plant J.">
        <title>Araport11: a complete reannotation of the Arabidopsis thaliana reference genome.</title>
        <authorList>
            <person name="Cheng C.Y."/>
            <person name="Krishnakumar V."/>
            <person name="Chan A.P."/>
            <person name="Thibaud-Nissen F."/>
            <person name="Schobel S."/>
            <person name="Town C.D."/>
        </authorList>
    </citation>
    <scope>GENOME REANNOTATION</scope>
    <source>
        <strain>cv. Columbia</strain>
    </source>
</reference>
<reference key="3">
    <citation type="journal article" date="2003" name="Science">
        <title>Empirical analysis of transcriptional activity in the Arabidopsis genome.</title>
        <authorList>
            <person name="Yamada K."/>
            <person name="Lim J."/>
            <person name="Dale J.M."/>
            <person name="Chen H."/>
            <person name="Shinn P."/>
            <person name="Palm C.J."/>
            <person name="Southwick A.M."/>
            <person name="Wu H.C."/>
            <person name="Kim C.J."/>
            <person name="Nguyen M."/>
            <person name="Pham P.K."/>
            <person name="Cheuk R.F."/>
            <person name="Karlin-Newmann G."/>
            <person name="Liu S.X."/>
            <person name="Lam B."/>
            <person name="Sakano H."/>
            <person name="Wu T."/>
            <person name="Yu G."/>
            <person name="Miranda M."/>
            <person name="Quach H.L."/>
            <person name="Tripp M."/>
            <person name="Chang C.H."/>
            <person name="Lee J.M."/>
            <person name="Toriumi M.J."/>
            <person name="Chan M.M."/>
            <person name="Tang C.C."/>
            <person name="Onodera C.S."/>
            <person name="Deng J.M."/>
            <person name="Akiyama K."/>
            <person name="Ansari Y."/>
            <person name="Arakawa T."/>
            <person name="Banh J."/>
            <person name="Banno F."/>
            <person name="Bowser L."/>
            <person name="Brooks S.Y."/>
            <person name="Carninci P."/>
            <person name="Chao Q."/>
            <person name="Choy N."/>
            <person name="Enju A."/>
            <person name="Goldsmith A.D."/>
            <person name="Gurjal M."/>
            <person name="Hansen N.F."/>
            <person name="Hayashizaki Y."/>
            <person name="Johnson-Hopson C."/>
            <person name="Hsuan V.W."/>
            <person name="Iida K."/>
            <person name="Karnes M."/>
            <person name="Khan S."/>
            <person name="Koesema E."/>
            <person name="Ishida J."/>
            <person name="Jiang P.X."/>
            <person name="Jones T."/>
            <person name="Kawai J."/>
            <person name="Kamiya A."/>
            <person name="Meyers C."/>
            <person name="Nakajima M."/>
            <person name="Narusaka M."/>
            <person name="Seki M."/>
            <person name="Sakurai T."/>
            <person name="Satou M."/>
            <person name="Tamse R."/>
            <person name="Vaysberg M."/>
            <person name="Wallender E.K."/>
            <person name="Wong C."/>
            <person name="Yamamura Y."/>
            <person name="Yuan S."/>
            <person name="Shinozaki K."/>
            <person name="Davis R.W."/>
            <person name="Theologis A."/>
            <person name="Ecker J.R."/>
        </authorList>
    </citation>
    <scope>NUCLEOTIDE SEQUENCE [LARGE SCALE MRNA]</scope>
    <source>
        <strain>cv. Columbia</strain>
    </source>
</reference>
<reference key="4">
    <citation type="journal article" date="2009" name="DNA Res.">
        <title>Analysis of multiple occurrences of alternative splicing events in Arabidopsis thaliana using novel sequenced full-length cDNAs.</title>
        <authorList>
            <person name="Iida K."/>
            <person name="Fukami-Kobayashi K."/>
            <person name="Toyoda A."/>
            <person name="Sakaki Y."/>
            <person name="Kobayashi M."/>
            <person name="Seki M."/>
            <person name="Shinozaki K."/>
        </authorList>
    </citation>
    <scope>NUCLEOTIDE SEQUENCE [LARGE SCALE MRNA]</scope>
    <source>
        <strain>cv. Columbia</strain>
    </source>
</reference>
<reference key="5">
    <citation type="submission" date="2002-03" db="EMBL/GenBank/DDBJ databases">
        <title>Full-length cDNA from Arabidopsis thaliana.</title>
        <authorList>
            <person name="Brover V.V."/>
            <person name="Troukhan M.E."/>
            <person name="Alexandrov N.A."/>
            <person name="Lu Y.-P."/>
            <person name="Flavell R.B."/>
            <person name="Feldmann K.A."/>
        </authorList>
    </citation>
    <scope>NUCLEOTIDE SEQUENCE [LARGE SCALE MRNA]</scope>
</reference>
<reference key="6">
    <citation type="journal article" date="2001" name="J. Biol. Chem.">
        <title>The Arabidopsis thaliana ABC protein superfamily, a complete inventory.</title>
        <authorList>
            <person name="Sanchez-Fernandez R."/>
            <person name="Davies T.G."/>
            <person name="Coleman J.O."/>
            <person name="Rea P.A."/>
        </authorList>
    </citation>
    <scope>GENE FAMILY</scope>
    <scope>NOMENCLATURE</scope>
</reference>
<reference key="7">
    <citation type="journal article" date="2002" name="Planta">
        <title>Multifunctionality of plant ABC transporters -- more than just detoxifiers.</title>
        <authorList>
            <person name="Martinoia E."/>
            <person name="Klein M."/>
            <person name="Geisler M."/>
            <person name="Bovet L."/>
            <person name="Forestier C."/>
            <person name="Kolukisaoglu H.U."/>
            <person name="Mueller-Roeber B."/>
            <person name="Schulz B."/>
        </authorList>
    </citation>
    <scope>GENE FAMILY</scope>
</reference>
<reference key="8">
    <citation type="journal article" date="2008" name="Trends Plant Sci.">
        <title>Plant ABC proteins - a unified nomenclature and updated inventory.</title>
        <authorList>
            <person name="Verrier P.J."/>
            <person name="Bird D."/>
            <person name="Burla B."/>
            <person name="Dassa E."/>
            <person name="Forestier C."/>
            <person name="Geisler M."/>
            <person name="Klein M."/>
            <person name="Kolukisaoglu H.U."/>
            <person name="Lee Y."/>
            <person name="Martinoia E."/>
            <person name="Murphy A."/>
            <person name="Rea P.A."/>
            <person name="Samuels L."/>
            <person name="Schulz B."/>
            <person name="Spalding E.J."/>
            <person name="Yazaki K."/>
            <person name="Theodoulou F.L."/>
        </authorList>
    </citation>
    <scope>GENE FAMILY</scope>
    <scope>NOMENCLATURE</scope>
</reference>
<dbReference type="EMBL" id="AL138656">
    <property type="protein sequence ID" value="CAB77574.1"/>
    <property type="molecule type" value="Genomic_DNA"/>
</dbReference>
<dbReference type="EMBL" id="CP002686">
    <property type="protein sequence ID" value="AEE79248.1"/>
    <property type="molecule type" value="Genomic_DNA"/>
</dbReference>
<dbReference type="EMBL" id="CP002686">
    <property type="protein sequence ID" value="ANM65786.1"/>
    <property type="molecule type" value="Genomic_DNA"/>
</dbReference>
<dbReference type="EMBL" id="AY054525">
    <property type="protein sequence ID" value="AAK96716.1"/>
    <property type="molecule type" value="mRNA"/>
</dbReference>
<dbReference type="EMBL" id="BT008795">
    <property type="protein sequence ID" value="AAP68234.1"/>
    <property type="molecule type" value="mRNA"/>
</dbReference>
<dbReference type="EMBL" id="AK317763">
    <property type="protein sequence ID" value="BAH20419.1"/>
    <property type="molecule type" value="mRNA"/>
</dbReference>
<dbReference type="EMBL" id="AY084906">
    <property type="protein sequence ID" value="AAM61469.1"/>
    <property type="molecule type" value="mRNA"/>
</dbReference>
<dbReference type="PIR" id="T47613">
    <property type="entry name" value="T47613"/>
</dbReference>
<dbReference type="RefSeq" id="NP_001327731.1">
    <property type="nucleotide sequence ID" value="NM_001339682.1"/>
</dbReference>
<dbReference type="RefSeq" id="NP_567001.1">
    <property type="nucleotide sequence ID" value="NM_115311.4"/>
</dbReference>
<dbReference type="SMR" id="Q9M1H3"/>
<dbReference type="BioGRID" id="9935">
    <property type="interactions" value="4"/>
</dbReference>
<dbReference type="FunCoup" id="Q9M1H3">
    <property type="interactions" value="4261"/>
</dbReference>
<dbReference type="STRING" id="3702.Q9M1H3"/>
<dbReference type="iPTMnet" id="Q9M1H3"/>
<dbReference type="PaxDb" id="3702-AT3G54540.1"/>
<dbReference type="ProteomicsDB" id="244586"/>
<dbReference type="EnsemblPlants" id="AT3G54540.1">
    <property type="protein sequence ID" value="AT3G54540.1"/>
    <property type="gene ID" value="AT3G54540"/>
</dbReference>
<dbReference type="EnsemblPlants" id="AT3G54540.2">
    <property type="protein sequence ID" value="AT3G54540.2"/>
    <property type="gene ID" value="AT3G54540"/>
</dbReference>
<dbReference type="GeneID" id="824619"/>
<dbReference type="Gramene" id="AT3G54540.1">
    <property type="protein sequence ID" value="AT3G54540.1"/>
    <property type="gene ID" value="AT3G54540"/>
</dbReference>
<dbReference type="Gramene" id="AT3G54540.2">
    <property type="protein sequence ID" value="AT3G54540.2"/>
    <property type="gene ID" value="AT3G54540"/>
</dbReference>
<dbReference type="KEGG" id="ath:AT3G54540"/>
<dbReference type="Araport" id="AT3G54540"/>
<dbReference type="TAIR" id="AT3G54540">
    <property type="gene designation" value="ABCF4"/>
</dbReference>
<dbReference type="eggNOG" id="KOG0066">
    <property type="taxonomic scope" value="Eukaryota"/>
</dbReference>
<dbReference type="HOGENOM" id="CLU_000604_36_5_1"/>
<dbReference type="InParanoid" id="Q9M1H3"/>
<dbReference type="OMA" id="ARLVLCM"/>
<dbReference type="OrthoDB" id="2110130at2759"/>
<dbReference type="PhylomeDB" id="Q9M1H3"/>
<dbReference type="CD-CODE" id="4299E36E">
    <property type="entry name" value="Nucleolus"/>
</dbReference>
<dbReference type="PRO" id="PR:Q9M1H3"/>
<dbReference type="Proteomes" id="UP000006548">
    <property type="component" value="Chromosome 3"/>
</dbReference>
<dbReference type="ExpressionAtlas" id="Q9M1H3">
    <property type="expression patterns" value="baseline and differential"/>
</dbReference>
<dbReference type="GO" id="GO:0005829">
    <property type="term" value="C:cytosol"/>
    <property type="evidence" value="ECO:0007005"/>
    <property type="project" value="TAIR"/>
</dbReference>
<dbReference type="GO" id="GO:0005524">
    <property type="term" value="F:ATP binding"/>
    <property type="evidence" value="ECO:0007669"/>
    <property type="project" value="UniProtKB-KW"/>
</dbReference>
<dbReference type="GO" id="GO:0016887">
    <property type="term" value="F:ATP hydrolysis activity"/>
    <property type="evidence" value="ECO:0007669"/>
    <property type="project" value="InterPro"/>
</dbReference>
<dbReference type="CDD" id="cd03221">
    <property type="entry name" value="ABCF_EF-3"/>
    <property type="match status" value="2"/>
</dbReference>
<dbReference type="FunFam" id="3.40.50.300:FF:000792">
    <property type="entry name" value="ABC transporter F family member 4"/>
    <property type="match status" value="1"/>
</dbReference>
<dbReference type="FunFam" id="3.40.50.300:FF:001124">
    <property type="entry name" value="ABC transporter F family member 4"/>
    <property type="match status" value="1"/>
</dbReference>
<dbReference type="Gene3D" id="3.40.50.300">
    <property type="entry name" value="P-loop containing nucleotide triphosphate hydrolases"/>
    <property type="match status" value="2"/>
</dbReference>
<dbReference type="InterPro" id="IPR003593">
    <property type="entry name" value="AAA+_ATPase"/>
</dbReference>
<dbReference type="InterPro" id="IPR003439">
    <property type="entry name" value="ABC_transporter-like_ATP-bd"/>
</dbReference>
<dbReference type="InterPro" id="IPR017871">
    <property type="entry name" value="ABC_transporter-like_CS"/>
</dbReference>
<dbReference type="InterPro" id="IPR050611">
    <property type="entry name" value="ABCF_EF3_subfamily"/>
</dbReference>
<dbReference type="InterPro" id="IPR027417">
    <property type="entry name" value="P-loop_NTPase"/>
</dbReference>
<dbReference type="PANTHER" id="PTHR19211:SF14">
    <property type="entry name" value="ATP-BINDING CASSETTE SUB-FAMILY F MEMBER 1"/>
    <property type="match status" value="1"/>
</dbReference>
<dbReference type="PANTHER" id="PTHR19211">
    <property type="entry name" value="ATP-BINDING TRANSPORT PROTEIN-RELATED"/>
    <property type="match status" value="1"/>
</dbReference>
<dbReference type="Pfam" id="PF00005">
    <property type="entry name" value="ABC_tran"/>
    <property type="match status" value="2"/>
</dbReference>
<dbReference type="SMART" id="SM00382">
    <property type="entry name" value="AAA"/>
    <property type="match status" value="2"/>
</dbReference>
<dbReference type="SUPFAM" id="SSF52540">
    <property type="entry name" value="P-loop containing nucleoside triphosphate hydrolases"/>
    <property type="match status" value="2"/>
</dbReference>
<dbReference type="PROSITE" id="PS00211">
    <property type="entry name" value="ABC_TRANSPORTER_1"/>
    <property type="match status" value="1"/>
</dbReference>
<dbReference type="PROSITE" id="PS50893">
    <property type="entry name" value="ABC_TRANSPORTER_2"/>
    <property type="match status" value="2"/>
</dbReference>
<keyword id="KW-0067">ATP-binding</keyword>
<keyword id="KW-0547">Nucleotide-binding</keyword>
<keyword id="KW-1185">Reference proteome</keyword>
<keyword id="KW-0677">Repeat</keyword>
<keyword id="KW-0813">Transport</keyword>
<comment type="similarity">
    <text evidence="3">Belongs to the ABC transporter superfamily. ABCF family. EF3 (TC 3.A.1.121) subfamily.</text>
</comment>
<sequence length="723" mass="80481">MGKKKSDESAATTKVKPSGKDASKDSKKEKLSVSAMLAGMDQKDDKPKKGSSSRTKAAPKSTSYTDGIDLPPSDEEDDGESDEEERQKEARRKLKSEQRHLEISVTDKEQKKREAKERLALQAAESAKREAMKDDHDAFTVVIGSKTSVLEGDDMADANVKDITIESFSVSARGKELLKNASVRISHGKRYGLIGPNGMGKSTLLKLLAWRKIPVPKNIDVLLVEQEVVGDEKSALNAVVSANEELVKLREEAEALQKSSSGADGENVDGEDDDDTGEKLAELYDRLQILGSDAAEAQASKILAGLGFTKDMQVRATQSFSGGWRMRISLARALFVQPTLLLLDEPTNHLDLRAVLWLEEYLCRWKKTLVVVSHDRDFLNTVCTEIIHLHDQNLHFYRGNFDGFESGYEQRRKEMNKKFDVYDKQMKAAKRTGNRGQQEKVKDRAKFTAAKEASKSKSKGKTVDEEGPAPEAPRKWRDYSVVFHFPEPTELTPPLLQLIEVSFSYPNRPDFRLSNVDVGIDMGTRVAIVGPNGAGKSTLLNLLAGDLVPTEGEMRRSQKLRIGRYSQHFVDLLTMGETPVQYLLRLHPDQEGFSKQEAVRAKLGKFGLPSHNHLSPIAKLSGGQKARVVFTSISMSKPHILLLDEPTNHLDMQSIDALADALDEFTGGVVLVSHDSRLISRVCAEEEKSQIWVVEDGTVNFFPGTFEEYKEDLQREIKAEVDE</sequence>
<organism>
    <name type="scientific">Arabidopsis thaliana</name>
    <name type="common">Mouse-ear cress</name>
    <dbReference type="NCBI Taxonomy" id="3702"/>
    <lineage>
        <taxon>Eukaryota</taxon>
        <taxon>Viridiplantae</taxon>
        <taxon>Streptophyta</taxon>
        <taxon>Embryophyta</taxon>
        <taxon>Tracheophyta</taxon>
        <taxon>Spermatophyta</taxon>
        <taxon>Magnoliopsida</taxon>
        <taxon>eudicotyledons</taxon>
        <taxon>Gunneridae</taxon>
        <taxon>Pentapetalae</taxon>
        <taxon>rosids</taxon>
        <taxon>malvids</taxon>
        <taxon>Brassicales</taxon>
        <taxon>Brassicaceae</taxon>
        <taxon>Camelineae</taxon>
        <taxon>Arabidopsis</taxon>
    </lineage>
</organism>
<feature type="chain" id="PRO_0000379141" description="ABC transporter F family member 4">
    <location>
        <begin position="1"/>
        <end position="723"/>
    </location>
</feature>
<feature type="domain" description="ABC transporter 1" evidence="1">
    <location>
        <begin position="163"/>
        <end position="423"/>
    </location>
</feature>
<feature type="domain" description="ABC transporter 2" evidence="1">
    <location>
        <begin position="496"/>
        <end position="721"/>
    </location>
</feature>
<feature type="region of interest" description="Disordered" evidence="2">
    <location>
        <begin position="1"/>
        <end position="117"/>
    </location>
</feature>
<feature type="region of interest" description="Disordered" evidence="2">
    <location>
        <begin position="256"/>
        <end position="275"/>
    </location>
</feature>
<feature type="region of interest" description="Disordered" evidence="2">
    <location>
        <begin position="427"/>
        <end position="472"/>
    </location>
</feature>
<feature type="compositionally biased region" description="Basic and acidic residues" evidence="2">
    <location>
        <begin position="18"/>
        <end position="31"/>
    </location>
</feature>
<feature type="compositionally biased region" description="Polar residues" evidence="2">
    <location>
        <begin position="50"/>
        <end position="65"/>
    </location>
</feature>
<feature type="compositionally biased region" description="Acidic residues" evidence="2">
    <location>
        <begin position="72"/>
        <end position="84"/>
    </location>
</feature>
<feature type="compositionally biased region" description="Basic and acidic residues" evidence="2">
    <location>
        <begin position="95"/>
        <end position="117"/>
    </location>
</feature>
<feature type="compositionally biased region" description="Acidic residues" evidence="2">
    <location>
        <begin position="266"/>
        <end position="275"/>
    </location>
</feature>
<feature type="compositionally biased region" description="Basic and acidic residues" evidence="2">
    <location>
        <begin position="437"/>
        <end position="446"/>
    </location>
</feature>
<feature type="binding site" evidence="1">
    <location>
        <begin position="195"/>
        <end position="202"/>
    </location>
    <ligand>
        <name>ATP</name>
        <dbReference type="ChEBI" id="CHEBI:30616"/>
    </ligand>
</feature>
<feature type="binding site" evidence="1">
    <location>
        <begin position="530"/>
        <end position="537"/>
    </location>
    <ligand>
        <name>ATP</name>
        <dbReference type="ChEBI" id="CHEBI:30616"/>
    </ligand>
</feature>
<feature type="sequence conflict" description="In Ref. 5; AAM61469." evidence="3" ref="5">
    <original>G</original>
    <variation>R</variation>
    <location>
        <position position="622"/>
    </location>
</feature>
<proteinExistence type="evidence at transcript level"/>
<accession>Q9M1H3</accession>
<accession>Q8LFD8</accession>
<name>AB4F_ARATH</name>
<protein>
    <recommendedName>
        <fullName>ABC transporter F family member 4</fullName>
        <shortName>ABC transporter ABCF.4</shortName>
        <shortName>AtABCF4</shortName>
    </recommendedName>
    <alternativeName>
        <fullName>GCN20-type ATP-binding cassette protein GCN4</fullName>
    </alternativeName>
</protein>